<feature type="chain" id="PRO_0000413895" description="Alpha-1,4-glucan:maltose-1-phosphate maltosyltransferase">
    <location>
        <begin position="1"/>
        <end position="675"/>
    </location>
</feature>
<feature type="active site" description="Nucleophile" evidence="1">
    <location>
        <position position="386"/>
    </location>
</feature>
<feature type="active site" description="Proton donor" evidence="1">
    <location>
        <position position="415"/>
    </location>
</feature>
<feature type="binding site" evidence="1">
    <location>
        <position position="256"/>
    </location>
    <ligand>
        <name>alpha-maltose 1-phosphate</name>
        <dbReference type="ChEBI" id="CHEBI:63576"/>
    </ligand>
</feature>
<feature type="binding site" evidence="1">
    <location>
        <position position="316"/>
    </location>
    <ligand>
        <name>alpha-maltose 1-phosphate</name>
        <dbReference type="ChEBI" id="CHEBI:63576"/>
    </ligand>
</feature>
<feature type="binding site" evidence="1">
    <location>
        <position position="351"/>
    </location>
    <ligand>
        <name>alpha-maltose 1-phosphate</name>
        <dbReference type="ChEBI" id="CHEBI:63576"/>
    </ligand>
</feature>
<feature type="binding site" evidence="1">
    <location>
        <position position="387"/>
    </location>
    <ligand>
        <name>alpha-maltose 1-phosphate</name>
        <dbReference type="ChEBI" id="CHEBI:63576"/>
    </ligand>
</feature>
<feature type="binding site" evidence="1">
    <location>
        <begin position="525"/>
        <end position="526"/>
    </location>
    <ligand>
        <name>alpha-maltose 1-phosphate</name>
        <dbReference type="ChEBI" id="CHEBI:63576"/>
    </ligand>
</feature>
<feature type="site" description="Transition state stabilizer" evidence="1">
    <location>
        <position position="471"/>
    </location>
</feature>
<keyword id="KW-0119">Carbohydrate metabolism</keyword>
<keyword id="KW-0328">Glycosyltransferase</keyword>
<keyword id="KW-1185">Reference proteome</keyword>
<keyword id="KW-0808">Transferase</keyword>
<evidence type="ECO:0000255" key="1">
    <source>
        <dbReference type="HAMAP-Rule" id="MF_02124"/>
    </source>
</evidence>
<evidence type="ECO:0000305" key="2"/>
<gene>
    <name evidence="1" type="primary">glgE</name>
    <name type="ordered locus">Cgl1225</name>
    <name type="ordered locus">cg1382</name>
</gene>
<reference key="1">
    <citation type="journal article" date="2003" name="Appl. Microbiol. Biotechnol.">
        <title>The Corynebacterium glutamicum genome: features and impacts on biotechnological processes.</title>
        <authorList>
            <person name="Ikeda M."/>
            <person name="Nakagawa S."/>
        </authorList>
    </citation>
    <scope>NUCLEOTIDE SEQUENCE [LARGE SCALE GENOMIC DNA]</scope>
    <source>
        <strain>ATCC 13032 / DSM 20300 / JCM 1318 / BCRC 11384 / CCUG 27702 / LMG 3730 / NBRC 12168 / NCIMB 10025 / NRRL B-2784 / 534</strain>
    </source>
</reference>
<reference key="2">
    <citation type="journal article" date="2003" name="J. Biotechnol.">
        <title>The complete Corynebacterium glutamicum ATCC 13032 genome sequence and its impact on the production of L-aspartate-derived amino acids and vitamins.</title>
        <authorList>
            <person name="Kalinowski J."/>
            <person name="Bathe B."/>
            <person name="Bartels D."/>
            <person name="Bischoff N."/>
            <person name="Bott M."/>
            <person name="Burkovski A."/>
            <person name="Dusch N."/>
            <person name="Eggeling L."/>
            <person name="Eikmanns B.J."/>
            <person name="Gaigalat L."/>
            <person name="Goesmann A."/>
            <person name="Hartmann M."/>
            <person name="Huthmacher K."/>
            <person name="Kraemer R."/>
            <person name="Linke B."/>
            <person name="McHardy A.C."/>
            <person name="Meyer F."/>
            <person name="Moeckel B."/>
            <person name="Pfefferle W."/>
            <person name="Puehler A."/>
            <person name="Rey D.A."/>
            <person name="Rueckert C."/>
            <person name="Rupp O."/>
            <person name="Sahm H."/>
            <person name="Wendisch V.F."/>
            <person name="Wiegraebe I."/>
            <person name="Tauch A."/>
        </authorList>
    </citation>
    <scope>NUCLEOTIDE SEQUENCE [LARGE SCALE GENOMIC DNA]</scope>
    <source>
        <strain>ATCC 13032 / DSM 20300 / JCM 1318 / BCRC 11384 / CCUG 27702 / LMG 3730 / NBRC 12168 / NCIMB 10025 / NRRL B-2784 / 534</strain>
    </source>
</reference>
<sequence>MTGRLGIDDVRPRILDGNPAKAVVGEIVPVSAIVWREGHDAIAATLNVSGPEDSSVAAEPIQIHMRPTPDNQDQSNAFFVPDVPGNWTFRVDAWSDPMATWRHAITTKIEAGQGSDELYNDFEHGAQLFERAAENLSKEDRTALFDVASSLRRGGDVRARLAPALTASVTHLLELNPLRELVTMGENLQVRVERRAALVNSWYELFPRSTGGWDESGTPVHGTFATTAQALERVAKMGFDTVYFPPIHPIGEVNRKGRNNTLTPEPHDVGSPWAIGSKDGGHDATHPRLGTIEDFQALLARARELNLEVALDLALQAAPDHPWAQEHREFFTVLADGTIAYAENPPKKYQDIYPINFDNDAPKIYEEVYRVVKFWVDLGVTTFRVDNPHTKPANFWQWLISAIHKSNPEVIFLAEAFTRPARLYGLAKIGFSQSYTYFTWKVTKEELTEFATEIARMADISRPNLFVNTPDILHASLQHGGRAMFAIRAALAATMSPVWGVYSGYELFEHEAVKPGSEEYLDSEKYELRPRDFEGALERGDSLEDYIALLNQIRRANPALQQLRNIHFHEADNDQIIAYSKVDALTGNTVLIVVNLDPRSAREATVRLDLGALGLEAGAQFEVRDAITGSRYLWSETNFVRLEPLRDVAHIFVLPELPASRRERLAWREIKTYRA</sequence>
<protein>
    <recommendedName>
        <fullName evidence="1">Alpha-1,4-glucan:maltose-1-phosphate maltosyltransferase</fullName>
        <shortName evidence="1">GMPMT</shortName>
        <ecNumber evidence="1">2.4.99.16</ecNumber>
    </recommendedName>
    <alternativeName>
        <fullName evidence="1">(1-&gt;4)-alpha-D-glucan:maltose-1-phosphate alpha-D-maltosyltransferase</fullName>
    </alternativeName>
</protein>
<name>GLGE_CORGL</name>
<proteinExistence type="inferred from homology"/>
<organism>
    <name type="scientific">Corynebacterium glutamicum (strain ATCC 13032 / DSM 20300 / JCM 1318 / BCRC 11384 / CCUG 27702 / LMG 3730 / NBRC 12168 / NCIMB 10025 / NRRL B-2784 / 534)</name>
    <dbReference type="NCBI Taxonomy" id="196627"/>
    <lineage>
        <taxon>Bacteria</taxon>
        <taxon>Bacillati</taxon>
        <taxon>Actinomycetota</taxon>
        <taxon>Actinomycetes</taxon>
        <taxon>Mycobacteriales</taxon>
        <taxon>Corynebacteriaceae</taxon>
        <taxon>Corynebacterium</taxon>
    </lineage>
</organism>
<accession>Q8NR39</accession>
<accession>Q6M5V8</accession>
<dbReference type="EC" id="2.4.99.16" evidence="1"/>
<dbReference type="EMBL" id="BA000036">
    <property type="protein sequence ID" value="BAB98618.1"/>
    <property type="status" value="ALT_INIT"/>
    <property type="molecule type" value="Genomic_DNA"/>
</dbReference>
<dbReference type="EMBL" id="BX927151">
    <property type="protein sequence ID" value="CAF19929.1"/>
    <property type="molecule type" value="Genomic_DNA"/>
</dbReference>
<dbReference type="RefSeq" id="NP_600449.1">
    <property type="nucleotide sequence ID" value="NC_003450.3"/>
</dbReference>
<dbReference type="RefSeq" id="WP_011014215.1">
    <property type="nucleotide sequence ID" value="NC_006958.1"/>
</dbReference>
<dbReference type="SMR" id="Q8NR39"/>
<dbReference type="STRING" id="196627.cg1382"/>
<dbReference type="CAZy" id="GH13">
    <property type="family name" value="Glycoside Hydrolase Family 13"/>
</dbReference>
<dbReference type="KEGG" id="cgb:cg1382"/>
<dbReference type="KEGG" id="cgl:Cgl1225"/>
<dbReference type="PATRIC" id="fig|196627.13.peg.1205"/>
<dbReference type="eggNOG" id="COG0366">
    <property type="taxonomic scope" value="Bacteria"/>
</dbReference>
<dbReference type="HOGENOM" id="CLU_653496_0_0_11"/>
<dbReference type="OrthoDB" id="9805159at2"/>
<dbReference type="BioCyc" id="CORYNE:G18NG-10798-MONOMER"/>
<dbReference type="Proteomes" id="UP000000582">
    <property type="component" value="Chromosome"/>
</dbReference>
<dbReference type="Proteomes" id="UP000001009">
    <property type="component" value="Chromosome"/>
</dbReference>
<dbReference type="GO" id="GO:0016758">
    <property type="term" value="F:hexosyltransferase activity"/>
    <property type="evidence" value="ECO:0007669"/>
    <property type="project" value="UniProtKB-UniRule"/>
</dbReference>
<dbReference type="GO" id="GO:0004553">
    <property type="term" value="F:hydrolase activity, hydrolyzing O-glycosyl compounds"/>
    <property type="evidence" value="ECO:0007669"/>
    <property type="project" value="InterPro"/>
</dbReference>
<dbReference type="GO" id="GO:0030979">
    <property type="term" value="P:alpha-glucan biosynthetic process"/>
    <property type="evidence" value="ECO:0007669"/>
    <property type="project" value="UniProtKB-UniRule"/>
</dbReference>
<dbReference type="CDD" id="cd11344">
    <property type="entry name" value="AmyAc_GlgE_like"/>
    <property type="match status" value="1"/>
</dbReference>
<dbReference type="Gene3D" id="3.20.20.80">
    <property type="entry name" value="Glycosidases"/>
    <property type="match status" value="1"/>
</dbReference>
<dbReference type="Gene3D" id="2.60.40.1180">
    <property type="entry name" value="Golgi alpha-mannosidase II"/>
    <property type="match status" value="1"/>
</dbReference>
<dbReference type="Gene3D" id="2.60.40.10">
    <property type="entry name" value="Immunoglobulins"/>
    <property type="match status" value="1"/>
</dbReference>
<dbReference type="Gene3D" id="1.20.58.80">
    <property type="entry name" value="Phosphotransferase system, lactose/cellobiose-type IIA subunit"/>
    <property type="match status" value="1"/>
</dbReference>
<dbReference type="HAMAP" id="MF_02124">
    <property type="entry name" value="GlgE"/>
    <property type="match status" value="1"/>
</dbReference>
<dbReference type="InterPro" id="IPR026585">
    <property type="entry name" value="GlgE"/>
</dbReference>
<dbReference type="InterPro" id="IPR049171">
    <property type="entry name" value="GLGE_C"/>
</dbReference>
<dbReference type="InterPro" id="IPR021828">
    <property type="entry name" value="GlgE_dom_N/S"/>
</dbReference>
<dbReference type="InterPro" id="IPR006047">
    <property type="entry name" value="Glyco_hydro_13_cat_dom"/>
</dbReference>
<dbReference type="InterPro" id="IPR013780">
    <property type="entry name" value="Glyco_hydro_b"/>
</dbReference>
<dbReference type="InterPro" id="IPR017853">
    <property type="entry name" value="Glycoside_hydrolase_SF"/>
</dbReference>
<dbReference type="InterPro" id="IPR013783">
    <property type="entry name" value="Ig-like_fold"/>
</dbReference>
<dbReference type="PANTHER" id="PTHR47786">
    <property type="entry name" value="ALPHA-1,4-GLUCAN:MALTOSE-1-PHOSPHATE MALTOSYLTRANSFERASE"/>
    <property type="match status" value="1"/>
</dbReference>
<dbReference type="PANTHER" id="PTHR47786:SF2">
    <property type="entry name" value="GLYCOSYL HYDROLASE FAMILY 13 CATALYTIC DOMAIN-CONTAINING PROTEIN"/>
    <property type="match status" value="1"/>
</dbReference>
<dbReference type="Pfam" id="PF21702">
    <property type="entry name" value="GLGE_C"/>
    <property type="match status" value="1"/>
</dbReference>
<dbReference type="Pfam" id="PF11896">
    <property type="entry name" value="GlgE_dom_N_S"/>
    <property type="match status" value="1"/>
</dbReference>
<dbReference type="SMART" id="SM00642">
    <property type="entry name" value="Aamy"/>
    <property type="match status" value="1"/>
</dbReference>
<dbReference type="SUPFAM" id="SSF51445">
    <property type="entry name" value="(Trans)glycosidases"/>
    <property type="match status" value="1"/>
</dbReference>
<comment type="function">
    <text evidence="1">Maltosyltransferase that uses maltose 1-phosphate (M1P) as the sugar donor to elongate linear or branched alpha-(1-&gt;4)-glucans. Is involved in a branched alpha-glucan biosynthetic pathway from trehalose, together with TreS, Mak and GlgB.</text>
</comment>
<comment type="catalytic activity">
    <reaction evidence="1">
        <text>alpha-maltose 1-phosphate + [(1-&gt;4)-alpha-D-glucosyl](n) = [(1-&gt;4)-alpha-D-glucosyl](n+2) + phosphate</text>
        <dbReference type="Rhea" id="RHEA:42692"/>
        <dbReference type="Rhea" id="RHEA-COMP:9584"/>
        <dbReference type="Rhea" id="RHEA-COMP:10183"/>
        <dbReference type="ChEBI" id="CHEBI:15444"/>
        <dbReference type="ChEBI" id="CHEBI:43474"/>
        <dbReference type="ChEBI" id="CHEBI:63576"/>
        <dbReference type="EC" id="2.4.99.16"/>
    </reaction>
</comment>
<comment type="subunit">
    <text evidence="1">Homodimer.</text>
</comment>
<comment type="similarity">
    <text evidence="1">Belongs to the glycosyl hydrolase 13 family. GlgE subfamily.</text>
</comment>
<comment type="sequence caution" evidence="2">
    <conflict type="erroneous initiation">
        <sequence resource="EMBL-CDS" id="BAB98618"/>
    </conflict>
    <text>Truncated N-terminus.</text>
</comment>